<geneLocation type="mitochondrion"/>
<organism>
    <name type="scientific">Ornithorhynchus anatinus</name>
    <name type="common">Duckbill platypus</name>
    <dbReference type="NCBI Taxonomy" id="9258"/>
    <lineage>
        <taxon>Eukaryota</taxon>
        <taxon>Metazoa</taxon>
        <taxon>Chordata</taxon>
        <taxon>Craniata</taxon>
        <taxon>Vertebrata</taxon>
        <taxon>Euteleostomi</taxon>
        <taxon>Mammalia</taxon>
        <taxon>Monotremata</taxon>
        <taxon>Ornithorhynchidae</taxon>
        <taxon>Ornithorhynchus</taxon>
    </lineage>
</organism>
<name>NU4M_ORNAN</name>
<dbReference type="EC" id="7.1.1.2" evidence="1"/>
<dbReference type="EMBL" id="X83427">
    <property type="protein sequence ID" value="CAA58451.1"/>
    <property type="molecule type" value="Genomic_DNA"/>
</dbReference>
<dbReference type="PIR" id="B58889">
    <property type="entry name" value="B58889"/>
</dbReference>
<dbReference type="RefSeq" id="NP_008052.2">
    <property type="nucleotide sequence ID" value="NC_000891.1"/>
</dbReference>
<dbReference type="SMR" id="Q36458"/>
<dbReference type="FunCoup" id="Q36458">
    <property type="interactions" value="218"/>
</dbReference>
<dbReference type="STRING" id="9258.ENSOANP00000024988"/>
<dbReference type="GeneID" id="808699"/>
<dbReference type="KEGG" id="oaa:808699"/>
<dbReference type="CTD" id="4538"/>
<dbReference type="eggNOG" id="KOG4845">
    <property type="taxonomic scope" value="Eukaryota"/>
</dbReference>
<dbReference type="HOGENOM" id="CLU_007100_4_0_1"/>
<dbReference type="InParanoid" id="Q36458"/>
<dbReference type="OrthoDB" id="564260at2759"/>
<dbReference type="TreeFam" id="TF343520"/>
<dbReference type="Proteomes" id="UP000002279">
    <property type="component" value="Mitochondrion"/>
</dbReference>
<dbReference type="GO" id="GO:0005743">
    <property type="term" value="C:mitochondrial inner membrane"/>
    <property type="evidence" value="ECO:0000250"/>
    <property type="project" value="UniProtKB"/>
</dbReference>
<dbReference type="GO" id="GO:0045271">
    <property type="term" value="C:respiratory chain complex I"/>
    <property type="evidence" value="ECO:0000318"/>
    <property type="project" value="GO_Central"/>
</dbReference>
<dbReference type="GO" id="GO:0008137">
    <property type="term" value="F:NADH dehydrogenase (ubiquinone) activity"/>
    <property type="evidence" value="ECO:0000250"/>
    <property type="project" value="UniProtKB"/>
</dbReference>
<dbReference type="GO" id="GO:0048039">
    <property type="term" value="F:ubiquinone binding"/>
    <property type="evidence" value="ECO:0000318"/>
    <property type="project" value="GO_Central"/>
</dbReference>
<dbReference type="GO" id="GO:0009060">
    <property type="term" value="P:aerobic respiration"/>
    <property type="evidence" value="ECO:0000318"/>
    <property type="project" value="GO_Central"/>
</dbReference>
<dbReference type="GO" id="GO:0015990">
    <property type="term" value="P:electron transport coupled proton transport"/>
    <property type="evidence" value="ECO:0000318"/>
    <property type="project" value="GO_Central"/>
</dbReference>
<dbReference type="GO" id="GO:0006120">
    <property type="term" value="P:mitochondrial electron transport, NADH to ubiquinone"/>
    <property type="evidence" value="ECO:0000250"/>
    <property type="project" value="UniProtKB"/>
</dbReference>
<dbReference type="GO" id="GO:0032981">
    <property type="term" value="P:mitochondrial respiratory chain complex I assembly"/>
    <property type="evidence" value="ECO:0000250"/>
    <property type="project" value="UniProtKB"/>
</dbReference>
<dbReference type="InterPro" id="IPR000260">
    <property type="entry name" value="NADH4_N"/>
</dbReference>
<dbReference type="InterPro" id="IPR010227">
    <property type="entry name" value="NADH_Q_OxRdtase_chainM/4"/>
</dbReference>
<dbReference type="InterPro" id="IPR003918">
    <property type="entry name" value="NADH_UbQ_OxRdtase"/>
</dbReference>
<dbReference type="InterPro" id="IPR001750">
    <property type="entry name" value="ND/Mrp_TM"/>
</dbReference>
<dbReference type="NCBIfam" id="TIGR01972">
    <property type="entry name" value="NDH_I_M"/>
    <property type="match status" value="1"/>
</dbReference>
<dbReference type="PANTHER" id="PTHR43507">
    <property type="entry name" value="NADH-UBIQUINONE OXIDOREDUCTASE CHAIN 4"/>
    <property type="match status" value="1"/>
</dbReference>
<dbReference type="PANTHER" id="PTHR43507:SF20">
    <property type="entry name" value="NADH-UBIQUINONE OXIDOREDUCTASE CHAIN 4"/>
    <property type="match status" value="1"/>
</dbReference>
<dbReference type="Pfam" id="PF01059">
    <property type="entry name" value="Oxidored_q5_N"/>
    <property type="match status" value="1"/>
</dbReference>
<dbReference type="Pfam" id="PF00361">
    <property type="entry name" value="Proton_antipo_M"/>
    <property type="match status" value="1"/>
</dbReference>
<dbReference type="PRINTS" id="PR01437">
    <property type="entry name" value="NUOXDRDTASE4"/>
</dbReference>
<proteinExistence type="inferred from homology"/>
<protein>
    <recommendedName>
        <fullName>NADH-ubiquinone oxidoreductase chain 4</fullName>
        <ecNumber evidence="1">7.1.1.2</ecNumber>
    </recommendedName>
    <alternativeName>
        <fullName>NADH dehydrogenase subunit 4</fullName>
    </alternativeName>
</protein>
<keyword id="KW-0249">Electron transport</keyword>
<keyword id="KW-0472">Membrane</keyword>
<keyword id="KW-0496">Mitochondrion</keyword>
<keyword id="KW-0999">Mitochondrion inner membrane</keyword>
<keyword id="KW-0520">NAD</keyword>
<keyword id="KW-1185">Reference proteome</keyword>
<keyword id="KW-0679">Respiratory chain</keyword>
<keyword id="KW-1278">Translocase</keyword>
<keyword id="KW-0812">Transmembrane</keyword>
<keyword id="KW-1133">Transmembrane helix</keyword>
<keyword id="KW-0813">Transport</keyword>
<keyword id="KW-0830">Ubiquinone</keyword>
<accession>Q36458</accession>
<sequence length="460" mass="51741">MLKILIPTMMLLPLISYSKKEWVWINSSIYSLLISSFSLLTLNQHMDLGLNFNMSFSADSLSSPLLILSCWLLPLMILASQFHLMKEPMAHKRTYLMLLVILQIALLMAFSAVELIMYYILFETTLIPTLIVIARWGNQTERLNAGLYFLFYTLLGSLPLLVALIFIQTQLGSLHILLLTLTPNPLQDNWSNDILWLACMLAFLVKMPLYGFHLWLPKAHVEAPIAGSMVLAAILLKLGGYGILRIIIILEPISKFMAYPFIIMATWGMIMTSSICLRQTDLKSMIAYSSVSHMGLVVAASLIQTPWGFMGATAMMIAHGLTSSMLFCLANTNYERIHSRTMLLVRGLQMVLPLMSSWWLLASLANLGLPPTINLIGELMVIITTFSWSNFTLILLGLNTVITAIYSFYMLITVQRGKLTSHSLSINPSFTREHMIMTLHLLPLILLTLNPKLILGLTYC</sequence>
<evidence type="ECO:0000250" key="1">
    <source>
        <dbReference type="UniProtKB" id="P03905"/>
    </source>
</evidence>
<evidence type="ECO:0000250" key="2">
    <source>
        <dbReference type="UniProtKB" id="P03910"/>
    </source>
</evidence>
<evidence type="ECO:0000255" key="3"/>
<evidence type="ECO:0000305" key="4"/>
<evidence type="ECO:0000312" key="5">
    <source>
        <dbReference type="Proteomes" id="UP000002279"/>
    </source>
</evidence>
<gene>
    <name type="primary">MT-ND4</name>
    <name type="synonym">MTND4</name>
    <name type="synonym">NADH4</name>
    <name type="synonym">ND4</name>
</gene>
<reference key="1">
    <citation type="journal article" date="1996" name="J. Mol. Evol.">
        <title>The mitochondrial genome of a monotreme--the platypus (Ornithorhynchus anatinus).</title>
        <authorList>
            <person name="Janke A."/>
            <person name="Gemmell N.J."/>
            <person name="Feldmaier-Fuchs G."/>
            <person name="von Haeseler A."/>
            <person name="Paabo S."/>
        </authorList>
    </citation>
    <scope>NUCLEOTIDE SEQUENCE [LARGE SCALE GENOMIC DNA]</scope>
    <source>
        <strain evidence="5">Glennie</strain>
    </source>
</reference>
<feature type="chain" id="PRO_0000117961" description="NADH-ubiquinone oxidoreductase chain 4">
    <location>
        <begin position="1"/>
        <end position="460"/>
    </location>
</feature>
<feature type="transmembrane region" description="Helical" evidence="3">
    <location>
        <begin position="22"/>
        <end position="42"/>
    </location>
</feature>
<feature type="transmembrane region" description="Helical" evidence="3">
    <location>
        <begin position="65"/>
        <end position="85"/>
    </location>
</feature>
<feature type="transmembrane region" description="Helical" evidence="3">
    <location>
        <begin position="96"/>
        <end position="116"/>
    </location>
</feature>
<feature type="transmembrane region" description="Helical" evidence="3">
    <location>
        <begin position="117"/>
        <end position="137"/>
    </location>
</feature>
<feature type="transmembrane region" description="Helical" evidence="3">
    <location>
        <begin position="147"/>
        <end position="167"/>
    </location>
</feature>
<feature type="transmembrane region" description="Helical" evidence="3">
    <location>
        <begin position="194"/>
        <end position="214"/>
    </location>
</feature>
<feature type="transmembrane region" description="Helical" evidence="3">
    <location>
        <begin position="230"/>
        <end position="250"/>
    </location>
</feature>
<feature type="transmembrane region" description="Helical" evidence="3">
    <location>
        <begin position="256"/>
        <end position="276"/>
    </location>
</feature>
<feature type="transmembrane region" description="Helical" evidence="3">
    <location>
        <begin position="284"/>
        <end position="303"/>
    </location>
</feature>
<feature type="transmembrane region" description="Helical" evidence="3">
    <location>
        <begin position="308"/>
        <end position="330"/>
    </location>
</feature>
<feature type="transmembrane region" description="Helical" evidence="3">
    <location>
        <begin position="350"/>
        <end position="370"/>
    </location>
</feature>
<feature type="transmembrane region" description="Helical" evidence="3">
    <location>
        <begin position="373"/>
        <end position="393"/>
    </location>
</feature>
<feature type="transmembrane region" description="Helical" evidence="3">
    <location>
        <begin position="394"/>
        <end position="414"/>
    </location>
</feature>
<feature type="transmembrane region" description="Helical" evidence="3">
    <location>
        <begin position="435"/>
        <end position="455"/>
    </location>
</feature>
<comment type="function">
    <text evidence="1">Core subunit of the mitochondrial membrane respiratory chain NADH dehydrogenase (Complex I) which catalyzes electron transfer from NADH through the respiratory chain, using ubiquinone as an electron acceptor. Essential for the catalytic activity and assembly of complex I.</text>
</comment>
<comment type="catalytic activity">
    <reaction evidence="1">
        <text>a ubiquinone + NADH + 5 H(+)(in) = a ubiquinol + NAD(+) + 4 H(+)(out)</text>
        <dbReference type="Rhea" id="RHEA:29091"/>
        <dbReference type="Rhea" id="RHEA-COMP:9565"/>
        <dbReference type="Rhea" id="RHEA-COMP:9566"/>
        <dbReference type="ChEBI" id="CHEBI:15378"/>
        <dbReference type="ChEBI" id="CHEBI:16389"/>
        <dbReference type="ChEBI" id="CHEBI:17976"/>
        <dbReference type="ChEBI" id="CHEBI:57540"/>
        <dbReference type="ChEBI" id="CHEBI:57945"/>
        <dbReference type="EC" id="7.1.1.2"/>
    </reaction>
</comment>
<comment type="subunit">
    <text evidence="2">Core subunit of respiratory chain NADH dehydrogenase (Complex I) which is composed of 45 different subunits.</text>
</comment>
<comment type="subcellular location">
    <subcellularLocation>
        <location evidence="2">Mitochondrion inner membrane</location>
        <topology evidence="3">Multi-pass membrane protein</topology>
    </subcellularLocation>
</comment>
<comment type="similarity">
    <text evidence="4">Belongs to the complex I subunit 4 family.</text>
</comment>